<comment type="function">
    <text evidence="1">Catalyzes the NADPH-dependent reduction of 7-cyano-7-deazaguanine (preQ0) to 7-aminomethyl-7-deazaguanine (preQ1).</text>
</comment>
<comment type="catalytic activity">
    <reaction evidence="1">
        <text>7-aminomethyl-7-carbaguanine + 2 NADP(+) = 7-cyano-7-deazaguanine + 2 NADPH + 3 H(+)</text>
        <dbReference type="Rhea" id="RHEA:13409"/>
        <dbReference type="ChEBI" id="CHEBI:15378"/>
        <dbReference type="ChEBI" id="CHEBI:45075"/>
        <dbReference type="ChEBI" id="CHEBI:57783"/>
        <dbReference type="ChEBI" id="CHEBI:58349"/>
        <dbReference type="ChEBI" id="CHEBI:58703"/>
        <dbReference type="EC" id="1.7.1.13"/>
    </reaction>
</comment>
<comment type="pathway">
    <text evidence="1">tRNA modification; tRNA-queuosine biosynthesis.</text>
</comment>
<comment type="subunit">
    <text evidence="1">Homodimer.</text>
</comment>
<comment type="subcellular location">
    <subcellularLocation>
        <location evidence="1">Cytoplasm</location>
    </subcellularLocation>
</comment>
<comment type="similarity">
    <text evidence="1">Belongs to the GTP cyclohydrolase I family. QueF type 2 subfamily.</text>
</comment>
<sequence length="282" mass="32608">MSSYENHRALDGLTLGKSTDYRDNYDASLLQGVPRSLNRDPLGLTADNLPFHGADIWTLYELSWLNSHGLPQIAIGHVELDYTSVNLIESKSFKLYLNSFNQTRFDTWETVRQTLERDLRACAQGNVSVKLHRLDELEGLPVAHFHGACIDDQDISIDNYQFTASYLQHAVSGEKRVEETLVSHLLKSNCLITHQPDWGSIQIQYRGRKIDREKLLRYLVSFRHHNEFHEQCVERIFNDLLRFCQPETLSVYARYTRRGGLDINPWRSNTDFVPATGRLARQ</sequence>
<accession>A9MSB5</accession>
<evidence type="ECO:0000255" key="1">
    <source>
        <dbReference type="HAMAP-Rule" id="MF_00817"/>
    </source>
</evidence>
<organism>
    <name type="scientific">Salmonella arizonae (strain ATCC BAA-731 / CDC346-86 / RSK2980)</name>
    <dbReference type="NCBI Taxonomy" id="41514"/>
    <lineage>
        <taxon>Bacteria</taxon>
        <taxon>Pseudomonadati</taxon>
        <taxon>Pseudomonadota</taxon>
        <taxon>Gammaproteobacteria</taxon>
        <taxon>Enterobacterales</taxon>
        <taxon>Enterobacteriaceae</taxon>
        <taxon>Salmonella</taxon>
    </lineage>
</organism>
<name>QUEF_SALAR</name>
<keyword id="KW-0963">Cytoplasm</keyword>
<keyword id="KW-0521">NADP</keyword>
<keyword id="KW-0560">Oxidoreductase</keyword>
<keyword id="KW-0671">Queuosine biosynthesis</keyword>
<keyword id="KW-1185">Reference proteome</keyword>
<protein>
    <recommendedName>
        <fullName evidence="1">NADPH-dependent 7-cyano-7-deazaguanine reductase</fullName>
        <ecNumber evidence="1">1.7.1.13</ecNumber>
    </recommendedName>
    <alternativeName>
        <fullName evidence="1">7-cyano-7-carbaguanine reductase</fullName>
    </alternativeName>
    <alternativeName>
        <fullName evidence="1">NADPH-dependent nitrile oxidoreductase</fullName>
    </alternativeName>
    <alternativeName>
        <fullName evidence="1">PreQ(0) reductase</fullName>
    </alternativeName>
</protein>
<gene>
    <name evidence="1" type="primary">queF</name>
    <name type="ordered locus">SARI_04695</name>
</gene>
<reference key="1">
    <citation type="submission" date="2007-11" db="EMBL/GenBank/DDBJ databases">
        <authorList>
            <consortium name="The Salmonella enterica serovar Arizonae Genome Sequencing Project"/>
            <person name="McClelland M."/>
            <person name="Sanderson E.K."/>
            <person name="Porwollik S."/>
            <person name="Spieth J."/>
            <person name="Clifton W.S."/>
            <person name="Fulton R."/>
            <person name="Chunyan W."/>
            <person name="Wollam A."/>
            <person name="Shah N."/>
            <person name="Pepin K."/>
            <person name="Bhonagiri V."/>
            <person name="Nash W."/>
            <person name="Johnson M."/>
            <person name="Thiruvilangam P."/>
            <person name="Wilson R."/>
        </authorList>
    </citation>
    <scope>NUCLEOTIDE SEQUENCE [LARGE SCALE GENOMIC DNA]</scope>
    <source>
        <strain>ATCC BAA-731 / CDC346-86 / RSK2980</strain>
    </source>
</reference>
<feature type="chain" id="PRO_1000083830" description="NADPH-dependent 7-cyano-7-deazaguanine reductase">
    <location>
        <begin position="1"/>
        <end position="282"/>
    </location>
</feature>
<feature type="active site" description="Thioimide intermediate" evidence="1">
    <location>
        <position position="190"/>
    </location>
</feature>
<feature type="active site" description="Proton donor" evidence="1">
    <location>
        <position position="197"/>
    </location>
</feature>
<feature type="binding site" evidence="1">
    <location>
        <begin position="88"/>
        <end position="90"/>
    </location>
    <ligand>
        <name>substrate</name>
    </ligand>
</feature>
<feature type="binding site" evidence="1">
    <location>
        <begin position="90"/>
        <end position="91"/>
    </location>
    <ligand>
        <name>NADPH</name>
        <dbReference type="ChEBI" id="CHEBI:57783"/>
    </ligand>
</feature>
<feature type="binding site" evidence="1">
    <location>
        <begin position="229"/>
        <end position="230"/>
    </location>
    <ligand>
        <name>substrate</name>
    </ligand>
</feature>
<feature type="binding site" evidence="1">
    <location>
        <begin position="258"/>
        <end position="259"/>
    </location>
    <ligand>
        <name>NADPH</name>
        <dbReference type="ChEBI" id="CHEBI:57783"/>
    </ligand>
</feature>
<dbReference type="EC" id="1.7.1.13" evidence="1"/>
<dbReference type="EMBL" id="CP000880">
    <property type="protein sequence ID" value="ABX24459.1"/>
    <property type="molecule type" value="Genomic_DNA"/>
</dbReference>
<dbReference type="SMR" id="A9MSB5"/>
<dbReference type="STRING" id="41514.SARI_04695"/>
<dbReference type="KEGG" id="ses:SARI_04695"/>
<dbReference type="HOGENOM" id="CLU_054738_0_0_6"/>
<dbReference type="UniPathway" id="UPA00392"/>
<dbReference type="Proteomes" id="UP000002084">
    <property type="component" value="Chromosome"/>
</dbReference>
<dbReference type="GO" id="GO:0005737">
    <property type="term" value="C:cytoplasm"/>
    <property type="evidence" value="ECO:0007669"/>
    <property type="project" value="UniProtKB-SubCell"/>
</dbReference>
<dbReference type="GO" id="GO:0033739">
    <property type="term" value="F:preQ1 synthase activity"/>
    <property type="evidence" value="ECO:0007669"/>
    <property type="project" value="UniProtKB-UniRule"/>
</dbReference>
<dbReference type="GO" id="GO:0008616">
    <property type="term" value="P:queuosine biosynthetic process"/>
    <property type="evidence" value="ECO:0007669"/>
    <property type="project" value="UniProtKB-UniRule"/>
</dbReference>
<dbReference type="GO" id="GO:0006400">
    <property type="term" value="P:tRNA modification"/>
    <property type="evidence" value="ECO:0007669"/>
    <property type="project" value="UniProtKB-UniRule"/>
</dbReference>
<dbReference type="FunFam" id="3.30.1130.10:FF:000004">
    <property type="entry name" value="NADPH-dependent 7-cyano-7-deazaguanine reductase"/>
    <property type="match status" value="1"/>
</dbReference>
<dbReference type="Gene3D" id="3.30.1130.10">
    <property type="match status" value="2"/>
</dbReference>
<dbReference type="HAMAP" id="MF_00817">
    <property type="entry name" value="QueF_type2"/>
    <property type="match status" value="1"/>
</dbReference>
<dbReference type="InterPro" id="IPR043133">
    <property type="entry name" value="GTP-CH-I_C/QueF"/>
</dbReference>
<dbReference type="InterPro" id="IPR050084">
    <property type="entry name" value="NADPH_dep_7-cyano-7-deazaG_red"/>
</dbReference>
<dbReference type="InterPro" id="IPR029500">
    <property type="entry name" value="QueF"/>
</dbReference>
<dbReference type="InterPro" id="IPR029139">
    <property type="entry name" value="QueF_N"/>
</dbReference>
<dbReference type="InterPro" id="IPR016428">
    <property type="entry name" value="QueF_type2"/>
</dbReference>
<dbReference type="NCBIfam" id="TIGR03138">
    <property type="entry name" value="QueF"/>
    <property type="match status" value="1"/>
</dbReference>
<dbReference type="PANTHER" id="PTHR34354">
    <property type="entry name" value="NADPH-DEPENDENT 7-CYANO-7-DEAZAGUANINE REDUCTASE"/>
    <property type="match status" value="1"/>
</dbReference>
<dbReference type="PANTHER" id="PTHR34354:SF1">
    <property type="entry name" value="NADPH-DEPENDENT 7-CYANO-7-DEAZAGUANINE REDUCTASE"/>
    <property type="match status" value="1"/>
</dbReference>
<dbReference type="Pfam" id="PF14489">
    <property type="entry name" value="QueF"/>
    <property type="match status" value="1"/>
</dbReference>
<dbReference type="Pfam" id="PF14819">
    <property type="entry name" value="QueF_N"/>
    <property type="match status" value="1"/>
</dbReference>
<dbReference type="PIRSF" id="PIRSF004750">
    <property type="entry name" value="Nitrile_oxidored_YqcD_prd"/>
    <property type="match status" value="1"/>
</dbReference>
<dbReference type="SUPFAM" id="SSF55620">
    <property type="entry name" value="Tetrahydrobiopterin biosynthesis enzymes-like"/>
    <property type="match status" value="1"/>
</dbReference>
<proteinExistence type="inferred from homology"/>